<dbReference type="EMBL" id="CP000946">
    <property type="protein sequence ID" value="ACA79885.1"/>
    <property type="molecule type" value="Genomic_DNA"/>
</dbReference>
<dbReference type="RefSeq" id="WP_000378258.1">
    <property type="nucleotide sequence ID" value="NZ_MTFT01000013.1"/>
</dbReference>
<dbReference type="SMR" id="B1IX33"/>
<dbReference type="GeneID" id="93778448"/>
<dbReference type="KEGG" id="ecl:EcolC_4289"/>
<dbReference type="HOGENOM" id="CLU_016535_3_0_6"/>
<dbReference type="GO" id="GO:0005886">
    <property type="term" value="C:plasma membrane"/>
    <property type="evidence" value="ECO:0007669"/>
    <property type="project" value="UniProtKB-SubCell"/>
</dbReference>
<dbReference type="GO" id="GO:0032977">
    <property type="term" value="F:membrane insertase activity"/>
    <property type="evidence" value="ECO:0007669"/>
    <property type="project" value="InterPro"/>
</dbReference>
<dbReference type="GO" id="GO:0051205">
    <property type="term" value="P:protein insertion into membrane"/>
    <property type="evidence" value="ECO:0007669"/>
    <property type="project" value="TreeGrafter"/>
</dbReference>
<dbReference type="GO" id="GO:0015031">
    <property type="term" value="P:protein transport"/>
    <property type="evidence" value="ECO:0007669"/>
    <property type="project" value="UniProtKB-KW"/>
</dbReference>
<dbReference type="CDD" id="cd20070">
    <property type="entry name" value="5TM_YidC_Alb3"/>
    <property type="match status" value="1"/>
</dbReference>
<dbReference type="CDD" id="cd19961">
    <property type="entry name" value="EcYidC-like_peri"/>
    <property type="match status" value="1"/>
</dbReference>
<dbReference type="FunFam" id="2.70.98.90:FF:000001">
    <property type="entry name" value="Membrane protein insertase YidC"/>
    <property type="match status" value="1"/>
</dbReference>
<dbReference type="Gene3D" id="2.70.98.90">
    <property type="match status" value="1"/>
</dbReference>
<dbReference type="HAMAP" id="MF_01810">
    <property type="entry name" value="YidC_type1"/>
    <property type="match status" value="1"/>
</dbReference>
<dbReference type="InterPro" id="IPR019998">
    <property type="entry name" value="Membr_insert_YidC"/>
</dbReference>
<dbReference type="InterPro" id="IPR028053">
    <property type="entry name" value="Membr_insert_YidC_N"/>
</dbReference>
<dbReference type="InterPro" id="IPR001708">
    <property type="entry name" value="YidC/ALB3/OXA1/COX18"/>
</dbReference>
<dbReference type="InterPro" id="IPR028055">
    <property type="entry name" value="YidC/Oxa/ALB_C"/>
</dbReference>
<dbReference type="InterPro" id="IPR047196">
    <property type="entry name" value="YidC_ALB_C"/>
</dbReference>
<dbReference type="InterPro" id="IPR038221">
    <property type="entry name" value="YidC_periplasmic_sf"/>
</dbReference>
<dbReference type="NCBIfam" id="NF002351">
    <property type="entry name" value="PRK01318.1-1"/>
    <property type="match status" value="1"/>
</dbReference>
<dbReference type="NCBIfam" id="NF002352">
    <property type="entry name" value="PRK01318.1-3"/>
    <property type="match status" value="1"/>
</dbReference>
<dbReference type="NCBIfam" id="NF002353">
    <property type="entry name" value="PRK01318.1-4"/>
    <property type="match status" value="1"/>
</dbReference>
<dbReference type="NCBIfam" id="TIGR03593">
    <property type="entry name" value="yidC_nterm"/>
    <property type="match status" value="1"/>
</dbReference>
<dbReference type="NCBIfam" id="TIGR03592">
    <property type="entry name" value="yidC_oxa1_cterm"/>
    <property type="match status" value="1"/>
</dbReference>
<dbReference type="PANTHER" id="PTHR12428:SF65">
    <property type="entry name" value="CYTOCHROME C OXIDASE ASSEMBLY PROTEIN COX18, MITOCHONDRIAL"/>
    <property type="match status" value="1"/>
</dbReference>
<dbReference type="PANTHER" id="PTHR12428">
    <property type="entry name" value="OXA1"/>
    <property type="match status" value="1"/>
</dbReference>
<dbReference type="Pfam" id="PF02096">
    <property type="entry name" value="60KD_IMP"/>
    <property type="match status" value="1"/>
</dbReference>
<dbReference type="Pfam" id="PF14849">
    <property type="entry name" value="YidC_periplas"/>
    <property type="match status" value="1"/>
</dbReference>
<dbReference type="PRINTS" id="PR00701">
    <property type="entry name" value="60KDINNERMP"/>
</dbReference>
<dbReference type="PRINTS" id="PR01900">
    <property type="entry name" value="YIDCPROTEIN"/>
</dbReference>
<feature type="chain" id="PRO_1000088252" description="Membrane protein insertase YidC">
    <location>
        <begin position="1"/>
        <end position="548"/>
    </location>
</feature>
<feature type="transmembrane region" description="Helical" evidence="1">
    <location>
        <begin position="6"/>
        <end position="26"/>
    </location>
</feature>
<feature type="transmembrane region" description="Helical" evidence="1">
    <location>
        <begin position="350"/>
        <end position="370"/>
    </location>
</feature>
<feature type="transmembrane region" description="Helical" evidence="1">
    <location>
        <begin position="420"/>
        <end position="440"/>
    </location>
</feature>
<feature type="transmembrane region" description="Helical" evidence="1">
    <location>
        <begin position="458"/>
        <end position="478"/>
    </location>
</feature>
<feature type="transmembrane region" description="Helical" evidence="1">
    <location>
        <begin position="499"/>
        <end position="519"/>
    </location>
</feature>
<feature type="region of interest" description="Disordered" evidence="2">
    <location>
        <begin position="28"/>
        <end position="55"/>
    </location>
</feature>
<feature type="compositionally biased region" description="Low complexity" evidence="2">
    <location>
        <begin position="30"/>
        <end position="50"/>
    </location>
</feature>
<sequence length="548" mass="61540">MDSQRNLLVIALLFVSFMIWQAWEQDKNPQPQAQQTTQTTTTAAGSAADQGVPASGQGKLISVKTDVLDLTINTRGGDVEQALLPAYPKELNSTQPFQLLETSPQFIYQAQSGLTGRDGPDNPANGPRPLYNVEKDAYVLAEGQNELQVPMTYTDAAGNTFTKTFVLKRGDYAVNVNYNVQNAGEKPLEISTFGQLKQSITLPPHLDTGSSNFALHTFRGAAYSTPDEKYEKYKFDTIADNENLNISSKGGWVAMLQQYFATAWIPHNDGTNNFYTANLGNGIAAIGYKSQPVLVQPGQTGAMNSTLWVGPEIQDKMAAVAPHLDLTVDYGWLWFISQPLFKLLKWIHSFVGNWGFSIIIITFIVRGIMYPLTKAQYTSMAKMRMLQPKIQAMRERLGDDKQRISQEMMALYKAEKVNPLGGCFPLLIQMPIFLALYYMLMGSVELRQAPFALWIHDLSAQDPYYILPILMGVTMFFIQKMSPTTVTDPMQQKIMTFMPVIFTVFFLWFPSGLVLYYIVSNLVTIIQQQLIYRGLEKRGLHSREKKKS</sequence>
<reference key="1">
    <citation type="submission" date="2008-02" db="EMBL/GenBank/DDBJ databases">
        <title>Complete sequence of Escherichia coli C str. ATCC 8739.</title>
        <authorList>
            <person name="Copeland A."/>
            <person name="Lucas S."/>
            <person name="Lapidus A."/>
            <person name="Glavina del Rio T."/>
            <person name="Dalin E."/>
            <person name="Tice H."/>
            <person name="Bruce D."/>
            <person name="Goodwin L."/>
            <person name="Pitluck S."/>
            <person name="Kiss H."/>
            <person name="Brettin T."/>
            <person name="Detter J.C."/>
            <person name="Han C."/>
            <person name="Kuske C.R."/>
            <person name="Schmutz J."/>
            <person name="Larimer F."/>
            <person name="Land M."/>
            <person name="Hauser L."/>
            <person name="Kyrpides N."/>
            <person name="Mikhailova N."/>
            <person name="Ingram L."/>
            <person name="Richardson P."/>
        </authorList>
    </citation>
    <scope>NUCLEOTIDE SEQUENCE [LARGE SCALE GENOMIC DNA]</scope>
    <source>
        <strain>ATCC 8739 / DSM 1576 / NBRC 3972 / NCIMB 8545 / WDCM 00012 / Crooks</strain>
    </source>
</reference>
<evidence type="ECO:0000255" key="1">
    <source>
        <dbReference type="HAMAP-Rule" id="MF_01810"/>
    </source>
</evidence>
<evidence type="ECO:0000256" key="2">
    <source>
        <dbReference type="SAM" id="MobiDB-lite"/>
    </source>
</evidence>
<keyword id="KW-0997">Cell inner membrane</keyword>
<keyword id="KW-1003">Cell membrane</keyword>
<keyword id="KW-0143">Chaperone</keyword>
<keyword id="KW-0472">Membrane</keyword>
<keyword id="KW-0653">Protein transport</keyword>
<keyword id="KW-0812">Transmembrane</keyword>
<keyword id="KW-1133">Transmembrane helix</keyword>
<keyword id="KW-0813">Transport</keyword>
<organism>
    <name type="scientific">Escherichia coli (strain ATCC 8739 / DSM 1576 / NBRC 3972 / NCIMB 8545 / WDCM 00012 / Crooks)</name>
    <dbReference type="NCBI Taxonomy" id="481805"/>
    <lineage>
        <taxon>Bacteria</taxon>
        <taxon>Pseudomonadati</taxon>
        <taxon>Pseudomonadota</taxon>
        <taxon>Gammaproteobacteria</taxon>
        <taxon>Enterobacterales</taxon>
        <taxon>Enterobacteriaceae</taxon>
        <taxon>Escherichia</taxon>
    </lineage>
</organism>
<name>YIDC_ECOLC</name>
<accession>B1IX33</accession>
<proteinExistence type="inferred from homology"/>
<comment type="function">
    <text evidence="1">Required for the insertion and/or proper folding and/or complex formation of integral membrane proteins into the membrane. Involved in integration of membrane proteins that insert both dependently and independently of the Sec translocase complex, as well as at least some lipoproteins. Aids folding of multispanning membrane proteins.</text>
</comment>
<comment type="subunit">
    <text evidence="1">Interacts with the Sec translocase complex via SecD. Specifically interacts with transmembrane segments of nascent integral membrane proteins during membrane integration.</text>
</comment>
<comment type="subcellular location">
    <subcellularLocation>
        <location evidence="1">Cell inner membrane</location>
        <topology evidence="1">Multi-pass membrane protein</topology>
    </subcellularLocation>
</comment>
<comment type="similarity">
    <text evidence="1">Belongs to the OXA1/ALB3/YidC family. Type 1 subfamily.</text>
</comment>
<protein>
    <recommendedName>
        <fullName evidence="1">Membrane protein insertase YidC</fullName>
    </recommendedName>
    <alternativeName>
        <fullName evidence="1">Foldase YidC</fullName>
    </alternativeName>
    <alternativeName>
        <fullName evidence="1">Membrane integrase YidC</fullName>
    </alternativeName>
    <alternativeName>
        <fullName evidence="1">Membrane protein YidC</fullName>
    </alternativeName>
</protein>
<gene>
    <name evidence="1" type="primary">yidC</name>
    <name type="ordered locus">EcolC_4289</name>
</gene>